<reference key="1">
    <citation type="submission" date="2007-11" db="EMBL/GenBank/DDBJ databases">
        <authorList>
            <consortium name="The Salmonella enterica serovar Paratyphi B Genome Sequencing Project"/>
            <person name="McClelland M."/>
            <person name="Sanderson E.K."/>
            <person name="Porwollik S."/>
            <person name="Spieth J."/>
            <person name="Clifton W.S."/>
            <person name="Fulton R."/>
            <person name="Cordes M."/>
            <person name="Wollam A."/>
            <person name="Shah N."/>
            <person name="Pepin K."/>
            <person name="Bhonagiri V."/>
            <person name="Nash W."/>
            <person name="Johnson M."/>
            <person name="Thiruvilangam P."/>
            <person name="Wilson R."/>
        </authorList>
    </citation>
    <scope>NUCLEOTIDE SEQUENCE [LARGE SCALE GENOMIC DNA]</scope>
    <source>
        <strain>ATCC BAA-1250 / SPB7</strain>
    </source>
</reference>
<dbReference type="EMBL" id="CP000886">
    <property type="protein sequence ID" value="ABX65961.1"/>
    <property type="molecule type" value="Genomic_DNA"/>
</dbReference>
<dbReference type="RefSeq" id="WP_000983123.1">
    <property type="nucleotide sequence ID" value="NC_010102.1"/>
</dbReference>
<dbReference type="SMR" id="A9N361"/>
<dbReference type="KEGG" id="spq:SPAB_00528"/>
<dbReference type="PATRIC" id="fig|1016998.12.peg.501"/>
<dbReference type="HOGENOM" id="CLU_030174_1_0_6"/>
<dbReference type="BioCyc" id="SENT1016998:SPAB_RS02175-MONOMER"/>
<dbReference type="Proteomes" id="UP000008556">
    <property type="component" value="Chromosome"/>
</dbReference>
<dbReference type="GO" id="GO:0032153">
    <property type="term" value="C:cell division site"/>
    <property type="evidence" value="ECO:0007669"/>
    <property type="project" value="UniProtKB-UniRule"/>
</dbReference>
<dbReference type="GO" id="GO:0005886">
    <property type="term" value="C:plasma membrane"/>
    <property type="evidence" value="ECO:0007669"/>
    <property type="project" value="UniProtKB-SubCell"/>
</dbReference>
<dbReference type="GO" id="GO:0000917">
    <property type="term" value="P:division septum assembly"/>
    <property type="evidence" value="ECO:0007669"/>
    <property type="project" value="TreeGrafter"/>
</dbReference>
<dbReference type="GO" id="GO:0043093">
    <property type="term" value="P:FtsZ-dependent cytokinesis"/>
    <property type="evidence" value="ECO:0007669"/>
    <property type="project" value="UniProtKB-UniRule"/>
</dbReference>
<dbReference type="CDD" id="cd00231">
    <property type="entry name" value="ZipA"/>
    <property type="match status" value="1"/>
</dbReference>
<dbReference type="FunFam" id="3.30.1400.10:FF:000001">
    <property type="entry name" value="Cell division protein ZipA"/>
    <property type="match status" value="1"/>
</dbReference>
<dbReference type="Gene3D" id="3.30.1400.10">
    <property type="entry name" value="ZipA, C-terminal FtsZ-binding domain"/>
    <property type="match status" value="1"/>
</dbReference>
<dbReference type="HAMAP" id="MF_00509">
    <property type="entry name" value="ZipA"/>
    <property type="match status" value="1"/>
</dbReference>
<dbReference type="InterPro" id="IPR011919">
    <property type="entry name" value="Cell_div_ZipA"/>
</dbReference>
<dbReference type="InterPro" id="IPR007449">
    <property type="entry name" value="ZipA_FtsZ-bd_C"/>
</dbReference>
<dbReference type="InterPro" id="IPR036765">
    <property type="entry name" value="ZipA_FtsZ-bd_C_sf"/>
</dbReference>
<dbReference type="NCBIfam" id="TIGR02205">
    <property type="entry name" value="septum_zipA"/>
    <property type="match status" value="1"/>
</dbReference>
<dbReference type="PANTHER" id="PTHR38685">
    <property type="entry name" value="CELL DIVISION PROTEIN ZIPA"/>
    <property type="match status" value="1"/>
</dbReference>
<dbReference type="PANTHER" id="PTHR38685:SF1">
    <property type="entry name" value="CELL DIVISION PROTEIN ZIPA"/>
    <property type="match status" value="1"/>
</dbReference>
<dbReference type="Pfam" id="PF04354">
    <property type="entry name" value="ZipA_C"/>
    <property type="match status" value="1"/>
</dbReference>
<dbReference type="SMART" id="SM00771">
    <property type="entry name" value="ZipA_C"/>
    <property type="match status" value="1"/>
</dbReference>
<dbReference type="SUPFAM" id="SSF64383">
    <property type="entry name" value="Cell-division protein ZipA, C-terminal domain"/>
    <property type="match status" value="1"/>
</dbReference>
<accession>A9N361</accession>
<gene>
    <name evidence="1" type="primary">zipA</name>
    <name type="ordered locus">SPAB_00528</name>
</gene>
<name>ZIPA_SALPB</name>
<feature type="chain" id="PRO_1000081580" description="Cell division protein ZipA">
    <location>
        <begin position="1"/>
        <end position="328"/>
    </location>
</feature>
<feature type="topological domain" description="Periplasmic" evidence="1">
    <location>
        <begin position="1"/>
        <end position="6"/>
    </location>
</feature>
<feature type="transmembrane region" description="Helical" evidence="1">
    <location>
        <begin position="7"/>
        <end position="27"/>
    </location>
</feature>
<feature type="topological domain" description="Cytoplasmic" evidence="1">
    <location>
        <begin position="28"/>
        <end position="328"/>
    </location>
</feature>
<feature type="region of interest" description="Disordered" evidence="2">
    <location>
        <begin position="42"/>
        <end position="178"/>
    </location>
</feature>
<feature type="compositionally biased region" description="Acidic residues" evidence="2">
    <location>
        <begin position="51"/>
        <end position="63"/>
    </location>
</feature>
<feature type="compositionally biased region" description="Low complexity" evidence="2">
    <location>
        <begin position="85"/>
        <end position="102"/>
    </location>
</feature>
<feature type="compositionally biased region" description="Low complexity" evidence="2">
    <location>
        <begin position="111"/>
        <end position="132"/>
    </location>
</feature>
<feature type="compositionally biased region" description="Pro residues" evidence="2">
    <location>
        <begin position="133"/>
        <end position="143"/>
    </location>
</feature>
<feature type="compositionally biased region" description="Low complexity" evidence="2">
    <location>
        <begin position="144"/>
        <end position="153"/>
    </location>
</feature>
<feature type="compositionally biased region" description="Low complexity" evidence="2">
    <location>
        <begin position="163"/>
        <end position="178"/>
    </location>
</feature>
<sequence length="328" mass="36334">MMQDLRLILIIVGAIAIIALLVHGFWTSRKERSSMFRDRPLKRMKSKRDDDSYDDDVEEDEGVGEVRVHRVNHAPGQSQEHDAPRQSPQHQYQPPYASAQPRPAAPPQPQAPMQQPVQQPVQPAPQPQQVQPSAPPVQPPQQQPAPLSQAPQPVAQPAPPPSAQTFQPAEPVVEAEPVVEEAPVVEKPQRKEAVIIMNVAAHHGSELNGEVLLNSIQQSGFKFGDMNIFHRHLSPDGSGPALFSLANMVNPGTFDPEMTDFTTPGVTIFMQVPSYGDALQNFKLMLQSAQHIADEVGGVVLDDQRRMMTPQKLREYQDRIREVMDANA</sequence>
<proteinExistence type="inferred from homology"/>
<protein>
    <recommendedName>
        <fullName evidence="1">Cell division protein ZipA</fullName>
    </recommendedName>
</protein>
<organism>
    <name type="scientific">Salmonella paratyphi B (strain ATCC BAA-1250 / SPB7)</name>
    <dbReference type="NCBI Taxonomy" id="1016998"/>
    <lineage>
        <taxon>Bacteria</taxon>
        <taxon>Pseudomonadati</taxon>
        <taxon>Pseudomonadota</taxon>
        <taxon>Gammaproteobacteria</taxon>
        <taxon>Enterobacterales</taxon>
        <taxon>Enterobacteriaceae</taxon>
        <taxon>Salmonella</taxon>
    </lineage>
</organism>
<comment type="function">
    <text evidence="1">Essential cell division protein that stabilizes the FtsZ protofilaments by cross-linking them and that serves as a cytoplasmic membrane anchor for the Z ring. Also required for the recruitment to the septal ring of downstream cell division proteins.</text>
</comment>
<comment type="subunit">
    <text evidence="1">Interacts with FtsZ via their C-terminal domains.</text>
</comment>
<comment type="subcellular location">
    <subcellularLocation>
        <location evidence="1">Cell inner membrane</location>
        <topology evidence="1">Single-pass type I membrane protein</topology>
    </subcellularLocation>
    <text evidence="1">Localizes to the Z ring in an FtsZ-dependent manner.</text>
</comment>
<comment type="similarity">
    <text evidence="1">Belongs to the ZipA family.</text>
</comment>
<keyword id="KW-0131">Cell cycle</keyword>
<keyword id="KW-0132">Cell division</keyword>
<keyword id="KW-0997">Cell inner membrane</keyword>
<keyword id="KW-1003">Cell membrane</keyword>
<keyword id="KW-0472">Membrane</keyword>
<keyword id="KW-0812">Transmembrane</keyword>
<keyword id="KW-1133">Transmembrane helix</keyword>
<evidence type="ECO:0000255" key="1">
    <source>
        <dbReference type="HAMAP-Rule" id="MF_00509"/>
    </source>
</evidence>
<evidence type="ECO:0000256" key="2">
    <source>
        <dbReference type="SAM" id="MobiDB-lite"/>
    </source>
</evidence>